<accession>Q5XAW2</accession>
<reference key="1">
    <citation type="journal article" date="2004" name="J. Infect. Dis.">
        <title>Progress toward characterization of the group A Streptococcus metagenome: complete genome sequence of a macrolide-resistant serotype M6 strain.</title>
        <authorList>
            <person name="Banks D.J."/>
            <person name="Porcella S.F."/>
            <person name="Barbian K.D."/>
            <person name="Beres S.B."/>
            <person name="Philips L.E."/>
            <person name="Voyich J.M."/>
            <person name="DeLeo F.R."/>
            <person name="Martin J.M."/>
            <person name="Somerville G.A."/>
            <person name="Musser J.M."/>
        </authorList>
    </citation>
    <scope>NUCLEOTIDE SEQUENCE [LARGE SCALE GENOMIC DNA]</scope>
    <source>
        <strain>ATCC BAA-946 / MGAS10394</strain>
    </source>
</reference>
<dbReference type="EC" id="4.2.3.4" evidence="1"/>
<dbReference type="EMBL" id="CP000003">
    <property type="protein sequence ID" value="AAT87451.1"/>
    <property type="status" value="ALT_INIT"/>
    <property type="molecule type" value="Genomic_DNA"/>
</dbReference>
<dbReference type="RefSeq" id="WP_021340382.1">
    <property type="nucleotide sequence ID" value="NC_006086.1"/>
</dbReference>
<dbReference type="SMR" id="Q5XAW2"/>
<dbReference type="KEGG" id="spa:M6_Spy1316"/>
<dbReference type="HOGENOM" id="CLU_001201_0_1_9"/>
<dbReference type="UniPathway" id="UPA00053">
    <property type="reaction ID" value="UER00085"/>
</dbReference>
<dbReference type="Proteomes" id="UP000001167">
    <property type="component" value="Chromosome"/>
</dbReference>
<dbReference type="GO" id="GO:0005737">
    <property type="term" value="C:cytoplasm"/>
    <property type="evidence" value="ECO:0007669"/>
    <property type="project" value="UniProtKB-SubCell"/>
</dbReference>
<dbReference type="GO" id="GO:0003856">
    <property type="term" value="F:3-dehydroquinate synthase activity"/>
    <property type="evidence" value="ECO:0007669"/>
    <property type="project" value="UniProtKB-UniRule"/>
</dbReference>
<dbReference type="GO" id="GO:0046872">
    <property type="term" value="F:metal ion binding"/>
    <property type="evidence" value="ECO:0007669"/>
    <property type="project" value="UniProtKB-KW"/>
</dbReference>
<dbReference type="GO" id="GO:0000166">
    <property type="term" value="F:nucleotide binding"/>
    <property type="evidence" value="ECO:0007669"/>
    <property type="project" value="UniProtKB-KW"/>
</dbReference>
<dbReference type="GO" id="GO:0008652">
    <property type="term" value="P:amino acid biosynthetic process"/>
    <property type="evidence" value="ECO:0007669"/>
    <property type="project" value="UniProtKB-KW"/>
</dbReference>
<dbReference type="GO" id="GO:0009073">
    <property type="term" value="P:aromatic amino acid family biosynthetic process"/>
    <property type="evidence" value="ECO:0007669"/>
    <property type="project" value="UniProtKB-KW"/>
</dbReference>
<dbReference type="GO" id="GO:0009423">
    <property type="term" value="P:chorismate biosynthetic process"/>
    <property type="evidence" value="ECO:0007669"/>
    <property type="project" value="UniProtKB-UniRule"/>
</dbReference>
<dbReference type="CDD" id="cd08195">
    <property type="entry name" value="DHQS"/>
    <property type="match status" value="1"/>
</dbReference>
<dbReference type="FunFam" id="3.40.50.1970:FF:000007">
    <property type="entry name" value="Pentafunctional AROM polypeptide"/>
    <property type="match status" value="1"/>
</dbReference>
<dbReference type="Gene3D" id="3.40.50.1970">
    <property type="match status" value="1"/>
</dbReference>
<dbReference type="Gene3D" id="1.20.1090.10">
    <property type="entry name" value="Dehydroquinate synthase-like - alpha domain"/>
    <property type="match status" value="1"/>
</dbReference>
<dbReference type="HAMAP" id="MF_00110">
    <property type="entry name" value="DHQ_synthase"/>
    <property type="match status" value="1"/>
</dbReference>
<dbReference type="InterPro" id="IPR050071">
    <property type="entry name" value="Dehydroquinate_synthase"/>
</dbReference>
<dbReference type="InterPro" id="IPR016037">
    <property type="entry name" value="DHQ_synth_AroB"/>
</dbReference>
<dbReference type="InterPro" id="IPR030963">
    <property type="entry name" value="DHQ_synth_fam"/>
</dbReference>
<dbReference type="InterPro" id="IPR030960">
    <property type="entry name" value="DHQS/DOIS_N"/>
</dbReference>
<dbReference type="InterPro" id="IPR056179">
    <property type="entry name" value="DHQS_C"/>
</dbReference>
<dbReference type="NCBIfam" id="TIGR01357">
    <property type="entry name" value="aroB"/>
    <property type="match status" value="1"/>
</dbReference>
<dbReference type="PANTHER" id="PTHR43622">
    <property type="entry name" value="3-DEHYDROQUINATE SYNTHASE"/>
    <property type="match status" value="1"/>
</dbReference>
<dbReference type="PANTHER" id="PTHR43622:SF1">
    <property type="entry name" value="3-DEHYDROQUINATE SYNTHASE"/>
    <property type="match status" value="1"/>
</dbReference>
<dbReference type="Pfam" id="PF01761">
    <property type="entry name" value="DHQ_synthase"/>
    <property type="match status" value="1"/>
</dbReference>
<dbReference type="Pfam" id="PF24621">
    <property type="entry name" value="DHQS_C"/>
    <property type="match status" value="1"/>
</dbReference>
<dbReference type="PIRSF" id="PIRSF001455">
    <property type="entry name" value="DHQ_synth"/>
    <property type="match status" value="1"/>
</dbReference>
<dbReference type="SUPFAM" id="SSF56796">
    <property type="entry name" value="Dehydroquinate synthase-like"/>
    <property type="match status" value="1"/>
</dbReference>
<proteinExistence type="inferred from homology"/>
<keyword id="KW-0028">Amino-acid biosynthesis</keyword>
<keyword id="KW-0057">Aromatic amino acid biosynthesis</keyword>
<keyword id="KW-0170">Cobalt</keyword>
<keyword id="KW-0963">Cytoplasm</keyword>
<keyword id="KW-0456">Lyase</keyword>
<keyword id="KW-0479">Metal-binding</keyword>
<keyword id="KW-0520">NAD</keyword>
<keyword id="KW-0547">Nucleotide-binding</keyword>
<keyword id="KW-0862">Zinc</keyword>
<gene>
    <name evidence="1" type="primary">aroB</name>
    <name type="ordered locus">M6_Spy1316</name>
</gene>
<feature type="chain" id="PRO_0000140796" description="3-dehydroquinate synthase">
    <location>
        <begin position="1"/>
        <end position="357"/>
    </location>
</feature>
<feature type="binding site" evidence="1">
    <location>
        <begin position="104"/>
        <end position="108"/>
    </location>
    <ligand>
        <name>NAD(+)</name>
        <dbReference type="ChEBI" id="CHEBI:57540"/>
    </ligand>
</feature>
<feature type="binding site" evidence="1">
    <location>
        <begin position="128"/>
        <end position="129"/>
    </location>
    <ligand>
        <name>NAD(+)</name>
        <dbReference type="ChEBI" id="CHEBI:57540"/>
    </ligand>
</feature>
<feature type="binding site" evidence="1">
    <location>
        <position position="141"/>
    </location>
    <ligand>
        <name>NAD(+)</name>
        <dbReference type="ChEBI" id="CHEBI:57540"/>
    </ligand>
</feature>
<feature type="binding site" evidence="1">
    <location>
        <begin position="168"/>
        <end position="171"/>
    </location>
    <ligand>
        <name>NAD(+)</name>
        <dbReference type="ChEBI" id="CHEBI:57540"/>
    </ligand>
</feature>
<feature type="binding site" evidence="1">
    <location>
        <position position="183"/>
    </location>
    <ligand>
        <name>Zn(2+)</name>
        <dbReference type="ChEBI" id="CHEBI:29105"/>
    </ligand>
</feature>
<feature type="binding site" evidence="1">
    <location>
        <position position="243"/>
    </location>
    <ligand>
        <name>Zn(2+)</name>
        <dbReference type="ChEBI" id="CHEBI:29105"/>
    </ligand>
</feature>
<feature type="binding site" evidence="1">
    <location>
        <position position="260"/>
    </location>
    <ligand>
        <name>Zn(2+)</name>
        <dbReference type="ChEBI" id="CHEBI:29105"/>
    </ligand>
</feature>
<protein>
    <recommendedName>
        <fullName evidence="1">3-dehydroquinate synthase</fullName>
        <shortName evidence="1">DHQS</shortName>
        <ecNumber evidence="1">4.2.3.4</ecNumber>
    </recommendedName>
</protein>
<comment type="function">
    <text evidence="1">Catalyzes the conversion of 3-deoxy-D-arabino-heptulosonate 7-phosphate (DAHP) to dehydroquinate (DHQ).</text>
</comment>
<comment type="catalytic activity">
    <reaction evidence="1">
        <text>7-phospho-2-dehydro-3-deoxy-D-arabino-heptonate = 3-dehydroquinate + phosphate</text>
        <dbReference type="Rhea" id="RHEA:21968"/>
        <dbReference type="ChEBI" id="CHEBI:32364"/>
        <dbReference type="ChEBI" id="CHEBI:43474"/>
        <dbReference type="ChEBI" id="CHEBI:58394"/>
        <dbReference type="EC" id="4.2.3.4"/>
    </reaction>
</comment>
<comment type="cofactor">
    <cofactor evidence="1">
        <name>NAD(+)</name>
        <dbReference type="ChEBI" id="CHEBI:57540"/>
    </cofactor>
</comment>
<comment type="cofactor">
    <cofactor evidence="1">
        <name>Co(2+)</name>
        <dbReference type="ChEBI" id="CHEBI:48828"/>
    </cofactor>
    <cofactor evidence="1">
        <name>Zn(2+)</name>
        <dbReference type="ChEBI" id="CHEBI:29105"/>
    </cofactor>
    <text evidence="1">Binds 1 divalent metal cation per subunit. Can use either Co(2+) or Zn(2+).</text>
</comment>
<comment type="pathway">
    <text evidence="1">Metabolic intermediate biosynthesis; chorismate biosynthesis; chorismate from D-erythrose 4-phosphate and phosphoenolpyruvate: step 2/7.</text>
</comment>
<comment type="subcellular location">
    <subcellularLocation>
        <location evidence="1">Cytoplasm</location>
    </subcellularLocation>
</comment>
<comment type="similarity">
    <text evidence="1">Belongs to the sugar phosphate cyclases superfamily. Dehydroquinate synthase family.</text>
</comment>
<comment type="sequence caution" evidence="2">
    <conflict type="erroneous initiation">
        <sequence resource="EMBL-CDS" id="AAT87451"/>
    </conflict>
</comment>
<evidence type="ECO:0000255" key="1">
    <source>
        <dbReference type="HAMAP-Rule" id="MF_00110"/>
    </source>
</evidence>
<evidence type="ECO:0000305" key="2"/>
<sequence length="357" mass="40343">MPQTLHVHSRVKDYDILFTDHVLKTLADCLGERKQRKLLFITDQTVYHLYQTLFEEFAQQYNAFVHVCPPGGQSKSLERVSAIYDQLIAENFSKKDMIITIGGGVVGDLGGFVAATYYRGIPYIQIPTTLLSQVDSSIGGKVGVHFKGLTNMIGSIYPPEAIIISTIFLETLPQREFSCGISEMLKIGFIHDKPLFQQLRDFQKETDKQGLERLIYQSISNKKRIVEQDEFENGLRMSLNFGHTLGHAIESLCHHDFYHHGEAIAIGMVVDAKLAVSKGLLPKEDLDSLLQVFERYQLPTSLERADVSATSLFDVFKTDKKNSEQHIIFILPTETGFTTLAINKDDHQFVEKLDSLL</sequence>
<organism>
    <name type="scientific">Streptococcus pyogenes serotype M6 (strain ATCC BAA-946 / MGAS10394)</name>
    <dbReference type="NCBI Taxonomy" id="286636"/>
    <lineage>
        <taxon>Bacteria</taxon>
        <taxon>Bacillati</taxon>
        <taxon>Bacillota</taxon>
        <taxon>Bacilli</taxon>
        <taxon>Lactobacillales</taxon>
        <taxon>Streptococcaceae</taxon>
        <taxon>Streptococcus</taxon>
    </lineage>
</organism>
<name>AROB_STRP6</name>